<evidence type="ECO:0000255" key="1">
    <source>
        <dbReference type="HAMAP-Rule" id="MF_01619"/>
    </source>
</evidence>
<evidence type="ECO:0000305" key="2"/>
<reference key="1">
    <citation type="journal article" date="2007" name="J. Bacteriol.">
        <title>The genome sequence of avian pathogenic Escherichia coli strain O1:K1:H7 shares strong similarities with human extraintestinal pathogenic E. coli genomes.</title>
        <authorList>
            <person name="Johnson T.J."/>
            <person name="Kariyawasam S."/>
            <person name="Wannemuehler Y."/>
            <person name="Mangiamele P."/>
            <person name="Johnson S.J."/>
            <person name="Doetkott C."/>
            <person name="Skyberg J.A."/>
            <person name="Lynne A.M."/>
            <person name="Johnson J.R."/>
            <person name="Nolan L.K."/>
        </authorList>
    </citation>
    <scope>NUCLEOTIDE SEQUENCE [LARGE SCALE GENOMIC DNA]</scope>
</reference>
<name>MAO1_ECOK1</name>
<organism>
    <name type="scientific">Escherichia coli O1:K1 / APEC</name>
    <dbReference type="NCBI Taxonomy" id="405955"/>
    <lineage>
        <taxon>Bacteria</taxon>
        <taxon>Pseudomonadati</taxon>
        <taxon>Pseudomonadota</taxon>
        <taxon>Gammaproteobacteria</taxon>
        <taxon>Enterobacterales</taxon>
        <taxon>Enterobacteriaceae</taxon>
        <taxon>Escherichia</taxon>
    </lineage>
</organism>
<keyword id="KW-0479">Metal-binding</keyword>
<keyword id="KW-0520">NAD</keyword>
<keyword id="KW-0560">Oxidoreductase</keyword>
<keyword id="KW-1185">Reference proteome</keyword>
<comment type="catalytic activity">
    <reaction evidence="1">
        <text>(S)-malate + NAD(+) = pyruvate + CO2 + NADH</text>
        <dbReference type="Rhea" id="RHEA:12653"/>
        <dbReference type="ChEBI" id="CHEBI:15361"/>
        <dbReference type="ChEBI" id="CHEBI:15589"/>
        <dbReference type="ChEBI" id="CHEBI:16526"/>
        <dbReference type="ChEBI" id="CHEBI:57540"/>
        <dbReference type="ChEBI" id="CHEBI:57945"/>
        <dbReference type="EC" id="1.1.1.38"/>
    </reaction>
</comment>
<comment type="catalytic activity">
    <reaction evidence="1">
        <text>oxaloacetate + H(+) = pyruvate + CO2</text>
        <dbReference type="Rhea" id="RHEA:15641"/>
        <dbReference type="ChEBI" id="CHEBI:15361"/>
        <dbReference type="ChEBI" id="CHEBI:15378"/>
        <dbReference type="ChEBI" id="CHEBI:16452"/>
        <dbReference type="ChEBI" id="CHEBI:16526"/>
        <dbReference type="EC" id="1.1.1.38"/>
    </reaction>
</comment>
<comment type="cofactor">
    <cofactor evidence="1">
        <name>Mg(2+)</name>
        <dbReference type="ChEBI" id="CHEBI:18420"/>
    </cofactor>
    <cofactor evidence="1">
        <name>Mn(2+)</name>
        <dbReference type="ChEBI" id="CHEBI:29035"/>
    </cofactor>
    <text evidence="1">Divalent metal cations. Prefers magnesium or manganese.</text>
</comment>
<comment type="subunit">
    <text evidence="1">Homotetramer.</text>
</comment>
<comment type="similarity">
    <text evidence="1">Belongs to the malic enzymes family.</text>
</comment>
<comment type="sequence caution" evidence="2">
    <conflict type="erroneous initiation">
        <sequence resource="EMBL-CDS" id="ABJ00915"/>
    </conflict>
</comment>
<feature type="chain" id="PRO_0000323538" description="NAD-dependent malic enzyme">
    <location>
        <begin position="1"/>
        <end position="565"/>
    </location>
</feature>
<feature type="active site" description="Proton donor" evidence="1">
    <location>
        <position position="104"/>
    </location>
</feature>
<feature type="active site" description="Proton acceptor" evidence="1">
    <location>
        <position position="175"/>
    </location>
</feature>
<feature type="binding site" evidence="1">
    <location>
        <position position="157"/>
    </location>
    <ligand>
        <name>NAD(+)</name>
        <dbReference type="ChEBI" id="CHEBI:57540"/>
    </ligand>
</feature>
<feature type="binding site" evidence="1">
    <location>
        <position position="246"/>
    </location>
    <ligand>
        <name>a divalent metal cation</name>
        <dbReference type="ChEBI" id="CHEBI:60240"/>
    </ligand>
</feature>
<feature type="binding site" evidence="1">
    <location>
        <position position="247"/>
    </location>
    <ligand>
        <name>a divalent metal cation</name>
        <dbReference type="ChEBI" id="CHEBI:60240"/>
    </ligand>
</feature>
<feature type="binding site" evidence="1">
    <location>
        <position position="270"/>
    </location>
    <ligand>
        <name>a divalent metal cation</name>
        <dbReference type="ChEBI" id="CHEBI:60240"/>
    </ligand>
</feature>
<feature type="binding site" evidence="1">
    <location>
        <position position="270"/>
    </location>
    <ligand>
        <name>NAD(+)</name>
        <dbReference type="ChEBI" id="CHEBI:57540"/>
    </ligand>
</feature>
<feature type="binding site" evidence="1">
    <location>
        <position position="418"/>
    </location>
    <ligand>
        <name>NAD(+)</name>
        <dbReference type="ChEBI" id="CHEBI:57540"/>
    </ligand>
</feature>
<feature type="site" description="Important for activity" evidence="1">
    <location>
        <position position="270"/>
    </location>
</feature>
<dbReference type="EC" id="1.1.1.38" evidence="1"/>
<dbReference type="EMBL" id="CP000468">
    <property type="protein sequence ID" value="ABJ00915.1"/>
    <property type="status" value="ALT_INIT"/>
    <property type="molecule type" value="Genomic_DNA"/>
</dbReference>
<dbReference type="RefSeq" id="WP_000433462.1">
    <property type="nucleotide sequence ID" value="NZ_CADILS010000054.1"/>
</dbReference>
<dbReference type="SMR" id="A1AB75"/>
<dbReference type="KEGG" id="ecv:APECO1_615"/>
<dbReference type="HOGENOM" id="CLU_011405_5_2_6"/>
<dbReference type="Proteomes" id="UP000008216">
    <property type="component" value="Chromosome"/>
</dbReference>
<dbReference type="GO" id="GO:0005829">
    <property type="term" value="C:cytosol"/>
    <property type="evidence" value="ECO:0007669"/>
    <property type="project" value="TreeGrafter"/>
</dbReference>
<dbReference type="GO" id="GO:0004471">
    <property type="term" value="F:malate dehydrogenase (decarboxylating) (NAD+) activity"/>
    <property type="evidence" value="ECO:0007669"/>
    <property type="project" value="UniProtKB-UniRule"/>
</dbReference>
<dbReference type="GO" id="GO:0046872">
    <property type="term" value="F:metal ion binding"/>
    <property type="evidence" value="ECO:0007669"/>
    <property type="project" value="UniProtKB-KW"/>
</dbReference>
<dbReference type="GO" id="GO:0051287">
    <property type="term" value="F:NAD binding"/>
    <property type="evidence" value="ECO:0007669"/>
    <property type="project" value="InterPro"/>
</dbReference>
<dbReference type="GO" id="GO:0008948">
    <property type="term" value="F:oxaloacetate decarboxylase activity"/>
    <property type="evidence" value="ECO:0007669"/>
    <property type="project" value="UniProtKB-UniRule"/>
</dbReference>
<dbReference type="GO" id="GO:0006108">
    <property type="term" value="P:malate metabolic process"/>
    <property type="evidence" value="ECO:0007669"/>
    <property type="project" value="TreeGrafter"/>
</dbReference>
<dbReference type="CDD" id="cd05312">
    <property type="entry name" value="NAD_bind_1_malic_enz"/>
    <property type="match status" value="1"/>
</dbReference>
<dbReference type="FunFam" id="3.40.50.10380:FF:000001">
    <property type="entry name" value="NAD-dependent malic enzyme"/>
    <property type="match status" value="1"/>
</dbReference>
<dbReference type="FunFam" id="3.40.50.720:FF:000055">
    <property type="entry name" value="NAD-dependent malic enzyme"/>
    <property type="match status" value="1"/>
</dbReference>
<dbReference type="Gene3D" id="3.40.50.10380">
    <property type="entry name" value="Malic enzyme, N-terminal domain"/>
    <property type="match status" value="1"/>
</dbReference>
<dbReference type="Gene3D" id="3.40.50.720">
    <property type="entry name" value="NAD(P)-binding Rossmann-like Domain"/>
    <property type="match status" value="1"/>
</dbReference>
<dbReference type="HAMAP" id="MF_01619">
    <property type="entry name" value="NAD_malic_enz"/>
    <property type="match status" value="1"/>
</dbReference>
<dbReference type="InterPro" id="IPR046346">
    <property type="entry name" value="Aminoacid_DH-like_N_sf"/>
</dbReference>
<dbReference type="InterPro" id="IPR015884">
    <property type="entry name" value="Malic_enzyme_CS"/>
</dbReference>
<dbReference type="InterPro" id="IPR012301">
    <property type="entry name" value="Malic_N_dom"/>
</dbReference>
<dbReference type="InterPro" id="IPR037062">
    <property type="entry name" value="Malic_N_dom_sf"/>
</dbReference>
<dbReference type="InterPro" id="IPR012302">
    <property type="entry name" value="Malic_NAD-bd"/>
</dbReference>
<dbReference type="InterPro" id="IPR001891">
    <property type="entry name" value="Malic_OxRdtase"/>
</dbReference>
<dbReference type="InterPro" id="IPR036291">
    <property type="entry name" value="NAD(P)-bd_dom_sf"/>
</dbReference>
<dbReference type="InterPro" id="IPR023667">
    <property type="entry name" value="NAD_malic_enz_proteobac"/>
</dbReference>
<dbReference type="NCBIfam" id="NF010052">
    <property type="entry name" value="PRK13529.1"/>
    <property type="match status" value="1"/>
</dbReference>
<dbReference type="PANTHER" id="PTHR23406">
    <property type="entry name" value="MALIC ENZYME-RELATED"/>
    <property type="match status" value="1"/>
</dbReference>
<dbReference type="PANTHER" id="PTHR23406:SF34">
    <property type="entry name" value="NAD-DEPENDENT MALIC ENZYME, MITOCHONDRIAL"/>
    <property type="match status" value="1"/>
</dbReference>
<dbReference type="Pfam" id="PF00390">
    <property type="entry name" value="malic"/>
    <property type="match status" value="1"/>
</dbReference>
<dbReference type="Pfam" id="PF03949">
    <property type="entry name" value="Malic_M"/>
    <property type="match status" value="1"/>
</dbReference>
<dbReference type="PIRSF" id="PIRSF000106">
    <property type="entry name" value="ME"/>
    <property type="match status" value="1"/>
</dbReference>
<dbReference type="PRINTS" id="PR00072">
    <property type="entry name" value="MALOXRDTASE"/>
</dbReference>
<dbReference type="SMART" id="SM01274">
    <property type="entry name" value="malic"/>
    <property type="match status" value="1"/>
</dbReference>
<dbReference type="SMART" id="SM00919">
    <property type="entry name" value="Malic_M"/>
    <property type="match status" value="1"/>
</dbReference>
<dbReference type="SUPFAM" id="SSF53223">
    <property type="entry name" value="Aminoacid dehydrogenase-like, N-terminal domain"/>
    <property type="match status" value="1"/>
</dbReference>
<dbReference type="SUPFAM" id="SSF51735">
    <property type="entry name" value="NAD(P)-binding Rossmann-fold domains"/>
    <property type="match status" value="1"/>
</dbReference>
<dbReference type="PROSITE" id="PS00331">
    <property type="entry name" value="MALIC_ENZYMES"/>
    <property type="match status" value="1"/>
</dbReference>
<proteinExistence type="inferred from homology"/>
<protein>
    <recommendedName>
        <fullName evidence="1">NAD-dependent malic enzyme</fullName>
        <shortName evidence="1">NAD-ME</shortName>
        <ecNumber evidence="1">1.1.1.38</ecNumber>
    </recommendedName>
</protein>
<sequence length="565" mass="63172">MEPKTKKQRSLYIPYAGPVLLEFPLLNKGSAFSMEERRNFNLLGLLPEVVETIEEQAERAWIQYQGFKTEIDKHIYLRNIQDTNETLFYRLVNNHLDEMMPVIYTPTVGAACERFSEIYRRSRGVFISYQNRHNMDDILQNVPNHNIKVIVVTDGERILGLGDQGIGGMGIPIGKLSLYTACGGISPAYTLPVVLDVGTNNQQLLNDPLYMGWRNPRITDDEYYEFVDEFIQAVKQRWPDVLLQFEDFAQKNAMPLLNRYRNEICSFNDDIQGTAAVTVGTLIAASRAAGGQLSEKKIVFLGAGSAGCGIAEMIIAQTQREGLSEEAARQKVFMVDRFGLLTDKMPNLLPFQTKLVQKRENLSDWDTDSDVLSLLDVVRNVKPDILIGVSGQTGLFTEEIIREMHKHCPRPIVMPLSNPTSRVEATPQDIIAWTEGNALVATGSPFNPVVWKDKIYPIAQCNNAFIFPGIGLGVIASGASRITDEMLMSASETLAQYSPLVLNGEGLVLPELKDIQKVSRAIAFAVGKMAQQQGVAVKTSAEALQQAIDDNFWHAEYRDYRRTSI</sequence>
<accession>A1AB75</accession>
<gene>
    <name evidence="1" type="primary">maeA</name>
    <name type="ordered locus">Ecok1_14210</name>
    <name type="ORF">APECO1_615</name>
</gene>